<evidence type="ECO:0000250" key="1">
    <source>
        <dbReference type="UniProtKB" id="P40416"/>
    </source>
</evidence>
<evidence type="ECO:0000250" key="2">
    <source>
        <dbReference type="UniProtKB" id="Q2G506"/>
    </source>
</evidence>
<evidence type="ECO:0000250" key="3">
    <source>
        <dbReference type="UniProtKB" id="Q9NP58"/>
    </source>
</evidence>
<evidence type="ECO:0000255" key="4"/>
<evidence type="ECO:0000255" key="5">
    <source>
        <dbReference type="PROSITE-ProRule" id="PRU00434"/>
    </source>
</evidence>
<evidence type="ECO:0000255" key="6">
    <source>
        <dbReference type="PROSITE-ProRule" id="PRU00441"/>
    </source>
</evidence>
<evidence type="ECO:0000305" key="7"/>
<reference key="1">
    <citation type="journal article" date="2015" name="Genome Announc.">
        <title>Draft genome sequence of the cellulolytic fungus Chaetomium globosum.</title>
        <authorList>
            <person name="Cuomo C.A."/>
            <person name="Untereiner W.A."/>
            <person name="Ma L.-J."/>
            <person name="Grabherr M."/>
            <person name="Birren B.W."/>
        </authorList>
    </citation>
    <scope>NUCLEOTIDE SEQUENCE [LARGE SCALE GENOMIC DNA]</scope>
    <source>
        <strain>ATCC 6205 / CBS 148.51 / DSM 1962 / NBRC 6347 / NRRL 1970</strain>
    </source>
</reference>
<keyword id="KW-0067">ATP-binding</keyword>
<keyword id="KW-0472">Membrane</keyword>
<keyword id="KW-0496">Mitochondrion</keyword>
<keyword id="KW-0999">Mitochondrion inner membrane</keyword>
<keyword id="KW-0547">Nucleotide-binding</keyword>
<keyword id="KW-1185">Reference proteome</keyword>
<keyword id="KW-0809">Transit peptide</keyword>
<keyword id="KW-1278">Translocase</keyword>
<keyword id="KW-0812">Transmembrane</keyword>
<keyword id="KW-1133">Transmembrane helix</keyword>
<keyword id="KW-0813">Transport</keyword>
<gene>
    <name evidence="7" type="primary">ATM1</name>
    <name type="ORF">CHGG_00005</name>
</gene>
<comment type="function">
    <text evidence="1">Performs an essential function in the generation of cytoplasmic iron-sulfur proteins by mediating the ATP-dependent export of Fe/S cluster precursors synthesized by NFS1 and other mitochondrial proteins (By similarity). Hydrolyzes ATP (By similarity). Binds glutathione and may function by transporting a glutathione-conjugated iron-sulfur compound (By similarity).</text>
</comment>
<comment type="subunit">
    <text evidence="1">Homodimer.</text>
</comment>
<comment type="subcellular location">
    <subcellularLocation>
        <location evidence="1">Mitochondrion inner membrane</location>
        <topology evidence="6">Multi-pass membrane protein</topology>
    </subcellularLocation>
</comment>
<comment type="similarity">
    <text evidence="7">Belongs to the ABC transporter superfamily. ABCB family. Heavy Metal importer (TC 3.A.1.210) subfamily.</text>
</comment>
<dbReference type="EC" id="7.-.-.-" evidence="2"/>
<dbReference type="EMBL" id="CH408029">
    <property type="protein sequence ID" value="EAQ91770.1"/>
    <property type="molecule type" value="Genomic_DNA"/>
</dbReference>
<dbReference type="RefSeq" id="XP_001219226.1">
    <property type="nucleotide sequence ID" value="XM_001219225.1"/>
</dbReference>
<dbReference type="SMR" id="Q2HIE9"/>
<dbReference type="FunCoup" id="Q2HIE9">
    <property type="interactions" value="613"/>
</dbReference>
<dbReference type="STRING" id="306901.Q2HIE9"/>
<dbReference type="GeneID" id="4386662"/>
<dbReference type="VEuPathDB" id="FungiDB:CHGG_00005"/>
<dbReference type="eggNOG" id="KOG0057">
    <property type="taxonomic scope" value="Eukaryota"/>
</dbReference>
<dbReference type="HOGENOM" id="CLU_000604_84_1_1"/>
<dbReference type="InParanoid" id="Q2HIE9"/>
<dbReference type="OMA" id="VFHIIPI"/>
<dbReference type="OrthoDB" id="6500128at2759"/>
<dbReference type="Proteomes" id="UP000001056">
    <property type="component" value="Unassembled WGS sequence"/>
</dbReference>
<dbReference type="GO" id="GO:0005743">
    <property type="term" value="C:mitochondrial inner membrane"/>
    <property type="evidence" value="ECO:0007669"/>
    <property type="project" value="UniProtKB-SubCell"/>
</dbReference>
<dbReference type="GO" id="GO:0140359">
    <property type="term" value="F:ABC-type transporter activity"/>
    <property type="evidence" value="ECO:0007669"/>
    <property type="project" value="InterPro"/>
</dbReference>
<dbReference type="GO" id="GO:0005524">
    <property type="term" value="F:ATP binding"/>
    <property type="evidence" value="ECO:0007669"/>
    <property type="project" value="UniProtKB-KW"/>
</dbReference>
<dbReference type="GO" id="GO:0016887">
    <property type="term" value="F:ATP hydrolysis activity"/>
    <property type="evidence" value="ECO:0007669"/>
    <property type="project" value="InterPro"/>
</dbReference>
<dbReference type="GO" id="GO:0006879">
    <property type="term" value="P:intracellular iron ion homeostasis"/>
    <property type="evidence" value="ECO:0007669"/>
    <property type="project" value="TreeGrafter"/>
</dbReference>
<dbReference type="CDD" id="cd18582">
    <property type="entry name" value="ABC_6TM_ATM1_ABCB7"/>
    <property type="match status" value="1"/>
</dbReference>
<dbReference type="CDD" id="cd03253">
    <property type="entry name" value="ABCC_ATM1_transporter"/>
    <property type="match status" value="1"/>
</dbReference>
<dbReference type="FunFam" id="1.20.1560.10:FF:000004">
    <property type="entry name" value="ATP-binding cassette sub-family B member 7"/>
    <property type="match status" value="1"/>
</dbReference>
<dbReference type="FunFam" id="3.40.50.300:FF:000186">
    <property type="entry name" value="ATP-binding cassette sub-family B member 7, mitochondrial"/>
    <property type="match status" value="1"/>
</dbReference>
<dbReference type="Gene3D" id="1.20.1560.10">
    <property type="entry name" value="ABC transporter type 1, transmembrane domain"/>
    <property type="match status" value="1"/>
</dbReference>
<dbReference type="Gene3D" id="3.40.50.300">
    <property type="entry name" value="P-loop containing nucleotide triphosphate hydrolases"/>
    <property type="match status" value="1"/>
</dbReference>
<dbReference type="InterPro" id="IPR003593">
    <property type="entry name" value="AAA+_ATPase"/>
</dbReference>
<dbReference type="InterPro" id="IPR011527">
    <property type="entry name" value="ABC1_TM_dom"/>
</dbReference>
<dbReference type="InterPro" id="IPR036640">
    <property type="entry name" value="ABC1_TM_sf"/>
</dbReference>
<dbReference type="InterPro" id="IPR003439">
    <property type="entry name" value="ABC_transporter-like_ATP-bd"/>
</dbReference>
<dbReference type="InterPro" id="IPR017871">
    <property type="entry name" value="ABC_transporter-like_CS"/>
</dbReference>
<dbReference type="InterPro" id="IPR027417">
    <property type="entry name" value="P-loop_NTPase"/>
</dbReference>
<dbReference type="InterPro" id="IPR039421">
    <property type="entry name" value="Type_1_exporter"/>
</dbReference>
<dbReference type="PANTHER" id="PTHR24221">
    <property type="entry name" value="ATP-BINDING CASSETTE SUB-FAMILY B"/>
    <property type="match status" value="1"/>
</dbReference>
<dbReference type="PANTHER" id="PTHR24221:SF402">
    <property type="entry name" value="IRON-SULFUR CLUSTERS TRANSPORTER ABCB7, MITOCHONDRIAL"/>
    <property type="match status" value="1"/>
</dbReference>
<dbReference type="Pfam" id="PF00664">
    <property type="entry name" value="ABC_membrane"/>
    <property type="match status" value="1"/>
</dbReference>
<dbReference type="Pfam" id="PF00005">
    <property type="entry name" value="ABC_tran"/>
    <property type="match status" value="1"/>
</dbReference>
<dbReference type="SMART" id="SM00382">
    <property type="entry name" value="AAA"/>
    <property type="match status" value="1"/>
</dbReference>
<dbReference type="SUPFAM" id="SSF90123">
    <property type="entry name" value="ABC transporter transmembrane region"/>
    <property type="match status" value="1"/>
</dbReference>
<dbReference type="SUPFAM" id="SSF52540">
    <property type="entry name" value="P-loop containing nucleoside triphosphate hydrolases"/>
    <property type="match status" value="1"/>
</dbReference>
<dbReference type="PROSITE" id="PS50929">
    <property type="entry name" value="ABC_TM1F"/>
    <property type="match status" value="1"/>
</dbReference>
<dbReference type="PROSITE" id="PS00211">
    <property type="entry name" value="ABC_TRANSPORTER_1"/>
    <property type="match status" value="1"/>
</dbReference>
<dbReference type="PROSITE" id="PS50893">
    <property type="entry name" value="ABC_TRANSPORTER_2"/>
    <property type="match status" value="1"/>
</dbReference>
<name>ATM1_CHAGB</name>
<protein>
    <recommendedName>
        <fullName evidence="7">Iron-sulfur clusters transporter ATM1, mitochondrial</fullName>
        <ecNumber evidence="2">7.-.-.-</ecNumber>
    </recommendedName>
</protein>
<accession>Q2HIE9</accession>
<feature type="transit peptide" description="Mitochondrion" evidence="4">
    <location>
        <begin position="1"/>
        <end status="unknown"/>
    </location>
</feature>
<feature type="chain" id="PRO_0000255442" description="Iron-sulfur clusters transporter ATM1, mitochondrial">
    <location>
        <begin status="unknown"/>
        <end position="603"/>
    </location>
</feature>
<feature type="topological domain" description="Mitochondrial matrix" evidence="1">
    <location>
        <begin status="unknown"/>
        <end position="19"/>
    </location>
</feature>
<feature type="transmembrane region" description="Helical" evidence="6">
    <location>
        <begin position="20"/>
        <end position="41"/>
    </location>
</feature>
<feature type="topological domain" description="Mitochondrial intermembrane" evidence="1">
    <location>
        <begin position="42"/>
        <end position="64"/>
    </location>
</feature>
<feature type="transmembrane region" description="Helical" evidence="6">
    <location>
        <begin position="65"/>
        <end position="88"/>
    </location>
</feature>
<feature type="topological domain" description="Mitochondrial matrix" evidence="1">
    <location>
        <begin position="89"/>
        <end position="137"/>
    </location>
</feature>
<feature type="transmembrane region" description="Helical" evidence="6">
    <location>
        <begin position="138"/>
        <end position="161"/>
    </location>
</feature>
<feature type="topological domain" description="Mitochondrial intermembrane" evidence="1">
    <location>
        <position position="162"/>
    </location>
</feature>
<feature type="transmembrane region" description="Helical" evidence="6">
    <location>
        <begin position="163"/>
        <end position="183"/>
    </location>
</feature>
<feature type="topological domain" description="Mitochondrial matrix" evidence="1">
    <location>
        <begin position="184"/>
        <end position="249"/>
    </location>
</feature>
<feature type="transmembrane region" description="Helical" evidence="6">
    <location>
        <begin position="250"/>
        <end position="268"/>
    </location>
</feature>
<feature type="topological domain" description="Mitochondrial intermembrane" evidence="1">
    <location>
        <begin position="269"/>
        <end position="283"/>
    </location>
</feature>
<feature type="transmembrane region" description="Helical" evidence="6">
    <location>
        <begin position="284"/>
        <end position="305"/>
    </location>
</feature>
<feature type="topological domain" description="Mitochondrial matrix" evidence="1">
    <location>
        <begin position="306"/>
        <end position="603"/>
    </location>
</feature>
<feature type="domain" description="ABC transmembrane type-1" evidence="6">
    <location>
        <begin position="20"/>
        <end position="310"/>
    </location>
</feature>
<feature type="domain" description="ABC transporter" evidence="5">
    <location>
        <begin position="345"/>
        <end position="581"/>
    </location>
</feature>
<feature type="binding site" evidence="1">
    <location>
        <begin position="189"/>
        <end position="193"/>
    </location>
    <ligand>
        <name>glutathione</name>
        <dbReference type="ChEBI" id="CHEBI:57925"/>
    </ligand>
</feature>
<feature type="binding site" evidence="1">
    <location>
        <begin position="252"/>
        <end position="255"/>
    </location>
    <ligand>
        <name>glutathione</name>
        <dbReference type="ChEBI" id="CHEBI:57925"/>
    </ligand>
</feature>
<feature type="binding site" evidence="2">
    <location>
        <position position="302"/>
    </location>
    <ligand>
        <name>glutathione</name>
        <dbReference type="ChEBI" id="CHEBI:57925"/>
    </ligand>
</feature>
<feature type="binding site" evidence="3">
    <location>
        <position position="354"/>
    </location>
    <ligand>
        <name>ATP</name>
        <dbReference type="ChEBI" id="CHEBI:30616"/>
    </ligand>
</feature>
<feature type="binding site" evidence="5">
    <location>
        <begin position="378"/>
        <end position="389"/>
    </location>
    <ligand>
        <name>ATP</name>
        <dbReference type="ChEBI" id="CHEBI:30616"/>
    </ligand>
</feature>
<proteinExistence type="inferred from homology"/>
<sequence length="603" mass="67070">MKEMSRYLWPKDSWGDKLRVLLAVGLLVGGKVLNVQVPFFFREIVDSLNVDIAATGGTVATVAGTMIFAYGASRIGAVVSQELRNAVFSSVAQKAIRRVATRTFGHLLNLDLNFHLSKQTGGLTRAIDRGTKGISFLLTSMVFHIVPTALEISMVCGILTYQFGWEFAAVTALTMSAYTAFTIWTTAWRTKFRRQANAADNKASTVAVDSLINYEAVKYFNNEKYEIGRYDKALHQYEKSSIKVATSLAFLNSGQNIIFSSALTIMMWLGAKGIVAGSLSVGDLVLINQLVFQLSVPLNFLGSVYRELRQSLLDMETLFNLQKVNLSIKEKPNAASLVLPKGGEIRFDNVSFGYYPDRPILNNLSVTIPAGKKVAVVGPSGCGKSTLLRLLFRSYDPQSGRIFIDDQDIRDVSLDSLRRSIGVVPQDTPLFNDTVELNIRYGNLDASREKVLEAARRAHIHDKIESWPHGYQTKVGERGLMISGGEKQRLAVSRLILKDPPLLFFDEATSALDTHTEQALMSNINEVLKEKRRTSVFVAHRLRTIYDADVIIVLKEGRVVEMGSHRELMEGNGLYTELWMAQEMSMHDQSLGRSEREAPVPVK</sequence>
<organism>
    <name type="scientific">Chaetomium globosum (strain ATCC 6205 / CBS 148.51 / DSM 1962 / NBRC 6347 / NRRL 1970)</name>
    <name type="common">Soil fungus</name>
    <dbReference type="NCBI Taxonomy" id="306901"/>
    <lineage>
        <taxon>Eukaryota</taxon>
        <taxon>Fungi</taxon>
        <taxon>Dikarya</taxon>
        <taxon>Ascomycota</taxon>
        <taxon>Pezizomycotina</taxon>
        <taxon>Sordariomycetes</taxon>
        <taxon>Sordariomycetidae</taxon>
        <taxon>Sordariales</taxon>
        <taxon>Chaetomiaceae</taxon>
        <taxon>Chaetomium</taxon>
    </lineage>
</organism>